<evidence type="ECO:0000255" key="1">
    <source>
        <dbReference type="HAMAP-Rule" id="MF_00075"/>
    </source>
</evidence>
<name>IF1_OCEIH</name>
<comment type="function">
    <text evidence="1">One of the essential components for the initiation of protein synthesis. Stabilizes the binding of IF-2 and IF-3 on the 30S subunit to which N-formylmethionyl-tRNA(fMet) subsequently binds. Helps modulate mRNA selection, yielding the 30S pre-initiation complex (PIC). Upon addition of the 50S ribosomal subunit IF-1, IF-2 and IF-3 are released leaving the mature 70S translation initiation complex.</text>
</comment>
<comment type="subunit">
    <text evidence="1">Component of the 30S ribosomal translation pre-initiation complex which assembles on the 30S ribosome in the order IF-2 and IF-3, IF-1 and N-formylmethionyl-tRNA(fMet); mRNA recruitment can occur at any time during PIC assembly.</text>
</comment>
<comment type="subcellular location">
    <subcellularLocation>
        <location evidence="1">Cytoplasm</location>
    </subcellularLocation>
</comment>
<comment type="similarity">
    <text evidence="1">Belongs to the IF-1 family.</text>
</comment>
<keyword id="KW-0963">Cytoplasm</keyword>
<keyword id="KW-0396">Initiation factor</keyword>
<keyword id="KW-0597">Phosphoprotein</keyword>
<keyword id="KW-0648">Protein biosynthesis</keyword>
<keyword id="KW-1185">Reference proteome</keyword>
<keyword id="KW-0694">RNA-binding</keyword>
<keyword id="KW-0699">rRNA-binding</keyword>
<organism>
    <name type="scientific">Oceanobacillus iheyensis (strain DSM 14371 / CIP 107618 / JCM 11309 / KCTC 3954 / HTE831)</name>
    <dbReference type="NCBI Taxonomy" id="221109"/>
    <lineage>
        <taxon>Bacteria</taxon>
        <taxon>Bacillati</taxon>
        <taxon>Bacillota</taxon>
        <taxon>Bacilli</taxon>
        <taxon>Bacillales</taxon>
        <taxon>Bacillaceae</taxon>
        <taxon>Oceanobacillus</taxon>
    </lineage>
</organism>
<feature type="chain" id="PRO_0000095836" description="Translation initiation factor IF-1">
    <location>
        <begin position="1"/>
        <end position="72"/>
    </location>
</feature>
<feature type="domain" description="S1-like" evidence="1">
    <location>
        <begin position="1"/>
        <end position="72"/>
    </location>
</feature>
<feature type="modified residue" description="Phosphotyrosine" evidence="1">
    <location>
        <position position="60"/>
    </location>
</feature>
<dbReference type="EMBL" id="BA000028">
    <property type="protein sequence ID" value="BAC12097.1"/>
    <property type="molecule type" value="Genomic_DNA"/>
</dbReference>
<dbReference type="RefSeq" id="WP_010652072.1">
    <property type="nucleotide sequence ID" value="NC_004193.1"/>
</dbReference>
<dbReference type="SMR" id="Q8ETW2"/>
<dbReference type="STRING" id="221109.gene:10732331"/>
<dbReference type="KEGG" id="oih:OB0141"/>
<dbReference type="eggNOG" id="COG0361">
    <property type="taxonomic scope" value="Bacteria"/>
</dbReference>
<dbReference type="HOGENOM" id="CLU_151267_1_0_9"/>
<dbReference type="OrthoDB" id="9803250at2"/>
<dbReference type="PhylomeDB" id="Q8ETW2"/>
<dbReference type="Proteomes" id="UP000000822">
    <property type="component" value="Chromosome"/>
</dbReference>
<dbReference type="GO" id="GO:0005829">
    <property type="term" value="C:cytosol"/>
    <property type="evidence" value="ECO:0007669"/>
    <property type="project" value="TreeGrafter"/>
</dbReference>
<dbReference type="GO" id="GO:0043022">
    <property type="term" value="F:ribosome binding"/>
    <property type="evidence" value="ECO:0007669"/>
    <property type="project" value="UniProtKB-UniRule"/>
</dbReference>
<dbReference type="GO" id="GO:0019843">
    <property type="term" value="F:rRNA binding"/>
    <property type="evidence" value="ECO:0007669"/>
    <property type="project" value="UniProtKB-UniRule"/>
</dbReference>
<dbReference type="GO" id="GO:0003743">
    <property type="term" value="F:translation initiation factor activity"/>
    <property type="evidence" value="ECO:0007669"/>
    <property type="project" value="UniProtKB-UniRule"/>
</dbReference>
<dbReference type="CDD" id="cd04451">
    <property type="entry name" value="S1_IF1"/>
    <property type="match status" value="1"/>
</dbReference>
<dbReference type="FunFam" id="2.40.50.140:FF:000002">
    <property type="entry name" value="Translation initiation factor IF-1"/>
    <property type="match status" value="1"/>
</dbReference>
<dbReference type="Gene3D" id="2.40.50.140">
    <property type="entry name" value="Nucleic acid-binding proteins"/>
    <property type="match status" value="1"/>
</dbReference>
<dbReference type="HAMAP" id="MF_00075">
    <property type="entry name" value="IF_1"/>
    <property type="match status" value="1"/>
</dbReference>
<dbReference type="InterPro" id="IPR012340">
    <property type="entry name" value="NA-bd_OB-fold"/>
</dbReference>
<dbReference type="InterPro" id="IPR006196">
    <property type="entry name" value="RNA-binding_domain_S1_IF1"/>
</dbReference>
<dbReference type="InterPro" id="IPR003029">
    <property type="entry name" value="S1_domain"/>
</dbReference>
<dbReference type="InterPro" id="IPR004368">
    <property type="entry name" value="TIF_IF1"/>
</dbReference>
<dbReference type="NCBIfam" id="TIGR00008">
    <property type="entry name" value="infA"/>
    <property type="match status" value="1"/>
</dbReference>
<dbReference type="PANTHER" id="PTHR33370">
    <property type="entry name" value="TRANSLATION INITIATION FACTOR IF-1, CHLOROPLASTIC"/>
    <property type="match status" value="1"/>
</dbReference>
<dbReference type="PANTHER" id="PTHR33370:SF1">
    <property type="entry name" value="TRANSLATION INITIATION FACTOR IF-1, CHLOROPLASTIC"/>
    <property type="match status" value="1"/>
</dbReference>
<dbReference type="Pfam" id="PF01176">
    <property type="entry name" value="eIF-1a"/>
    <property type="match status" value="1"/>
</dbReference>
<dbReference type="SMART" id="SM00316">
    <property type="entry name" value="S1"/>
    <property type="match status" value="1"/>
</dbReference>
<dbReference type="SUPFAM" id="SSF50249">
    <property type="entry name" value="Nucleic acid-binding proteins"/>
    <property type="match status" value="1"/>
</dbReference>
<dbReference type="PROSITE" id="PS50832">
    <property type="entry name" value="S1_IF1_TYPE"/>
    <property type="match status" value="1"/>
</dbReference>
<proteinExistence type="inferred from homology"/>
<accession>Q8ETW2</accession>
<sequence>MAKDDVIEVEGTVTDTLPNAMFKVELENGHTVLAHVSGKIRMHFIRILPGDKVTVELSPYDLTRGRITYRYK</sequence>
<protein>
    <recommendedName>
        <fullName evidence="1">Translation initiation factor IF-1</fullName>
    </recommendedName>
</protein>
<reference key="1">
    <citation type="journal article" date="2002" name="Nucleic Acids Res.">
        <title>Genome sequence of Oceanobacillus iheyensis isolated from the Iheya Ridge and its unexpected adaptive capabilities to extreme environments.</title>
        <authorList>
            <person name="Takami H."/>
            <person name="Takaki Y."/>
            <person name="Uchiyama I."/>
        </authorList>
    </citation>
    <scope>NUCLEOTIDE SEQUENCE [LARGE SCALE GENOMIC DNA]</scope>
    <source>
        <strain>DSM 14371 / CIP 107618 / JCM 11309 / KCTC 3954 / HTE831</strain>
    </source>
</reference>
<gene>
    <name evidence="1" type="primary">infA</name>
    <name type="ordered locus">OB0141</name>
</gene>